<proteinExistence type="evidence at protein level"/>
<name>TNNC2_HUMAN</name>
<reference key="1">
    <citation type="journal article" date="1988" name="J. Mol. Biol.">
        <title>Differential expression of slow and fast skeletal muscle troponin C. Slow skeletal muscle troponin C is expressed in human fibroblasts.</title>
        <authorList>
            <person name="Gahlmann R."/>
            <person name="Wade R."/>
            <person name="Gunning R."/>
            <person name="Kedes L."/>
        </authorList>
    </citation>
    <scope>NUCLEOTIDE SEQUENCE [MRNA]</scope>
</reference>
<reference key="2">
    <citation type="journal article" date="1990" name="J. Biol. Chem.">
        <title>Cloning, structural analysis, and expression of the human fast twitch skeletal muscle troponin C gene.</title>
        <authorList>
            <person name="Gahlmann R."/>
            <person name="Kedes L."/>
        </authorList>
    </citation>
    <scope>NUCLEOTIDE SEQUENCE [GENOMIC DNA]</scope>
</reference>
<reference key="3">
    <citation type="submission" date="1996-03" db="EMBL/GenBank/DDBJ databases">
        <authorList>
            <person name="Wu Q.L."/>
        </authorList>
    </citation>
    <scope>NUCLEOTIDE SEQUENCE [MRNA]</scope>
    <source>
        <tissue>Muscle</tissue>
    </source>
</reference>
<reference key="4">
    <citation type="journal article" date="2004" name="Nat. Genet.">
        <title>Complete sequencing and characterization of 21,243 full-length human cDNAs.</title>
        <authorList>
            <person name="Ota T."/>
            <person name="Suzuki Y."/>
            <person name="Nishikawa T."/>
            <person name="Otsuki T."/>
            <person name="Sugiyama T."/>
            <person name="Irie R."/>
            <person name="Wakamatsu A."/>
            <person name="Hayashi K."/>
            <person name="Sato H."/>
            <person name="Nagai K."/>
            <person name="Kimura K."/>
            <person name="Makita H."/>
            <person name="Sekine M."/>
            <person name="Obayashi M."/>
            <person name="Nishi T."/>
            <person name="Shibahara T."/>
            <person name="Tanaka T."/>
            <person name="Ishii S."/>
            <person name="Yamamoto J."/>
            <person name="Saito K."/>
            <person name="Kawai Y."/>
            <person name="Isono Y."/>
            <person name="Nakamura Y."/>
            <person name="Nagahari K."/>
            <person name="Murakami K."/>
            <person name="Yasuda T."/>
            <person name="Iwayanagi T."/>
            <person name="Wagatsuma M."/>
            <person name="Shiratori A."/>
            <person name="Sudo H."/>
            <person name="Hosoiri T."/>
            <person name="Kaku Y."/>
            <person name="Kodaira H."/>
            <person name="Kondo H."/>
            <person name="Sugawara M."/>
            <person name="Takahashi M."/>
            <person name="Kanda K."/>
            <person name="Yokoi T."/>
            <person name="Furuya T."/>
            <person name="Kikkawa E."/>
            <person name="Omura Y."/>
            <person name="Abe K."/>
            <person name="Kamihara K."/>
            <person name="Katsuta N."/>
            <person name="Sato K."/>
            <person name="Tanikawa M."/>
            <person name="Yamazaki M."/>
            <person name="Ninomiya K."/>
            <person name="Ishibashi T."/>
            <person name="Yamashita H."/>
            <person name="Murakawa K."/>
            <person name="Fujimori K."/>
            <person name="Tanai H."/>
            <person name="Kimata M."/>
            <person name="Watanabe M."/>
            <person name="Hiraoka S."/>
            <person name="Chiba Y."/>
            <person name="Ishida S."/>
            <person name="Ono Y."/>
            <person name="Takiguchi S."/>
            <person name="Watanabe S."/>
            <person name="Yosida M."/>
            <person name="Hotuta T."/>
            <person name="Kusano J."/>
            <person name="Kanehori K."/>
            <person name="Takahashi-Fujii A."/>
            <person name="Hara H."/>
            <person name="Tanase T.-O."/>
            <person name="Nomura Y."/>
            <person name="Togiya S."/>
            <person name="Komai F."/>
            <person name="Hara R."/>
            <person name="Takeuchi K."/>
            <person name="Arita M."/>
            <person name="Imose N."/>
            <person name="Musashino K."/>
            <person name="Yuuki H."/>
            <person name="Oshima A."/>
            <person name="Sasaki N."/>
            <person name="Aotsuka S."/>
            <person name="Yoshikawa Y."/>
            <person name="Matsunawa H."/>
            <person name="Ichihara T."/>
            <person name="Shiohata N."/>
            <person name="Sano S."/>
            <person name="Moriya S."/>
            <person name="Momiyama H."/>
            <person name="Satoh N."/>
            <person name="Takami S."/>
            <person name="Terashima Y."/>
            <person name="Suzuki O."/>
            <person name="Nakagawa S."/>
            <person name="Senoh A."/>
            <person name="Mizoguchi H."/>
            <person name="Goto Y."/>
            <person name="Shimizu F."/>
            <person name="Wakebe H."/>
            <person name="Hishigaki H."/>
            <person name="Watanabe T."/>
            <person name="Sugiyama A."/>
            <person name="Takemoto M."/>
            <person name="Kawakami B."/>
            <person name="Yamazaki M."/>
            <person name="Watanabe K."/>
            <person name="Kumagai A."/>
            <person name="Itakura S."/>
            <person name="Fukuzumi Y."/>
            <person name="Fujimori Y."/>
            <person name="Komiyama M."/>
            <person name="Tashiro H."/>
            <person name="Tanigami A."/>
            <person name="Fujiwara T."/>
            <person name="Ono T."/>
            <person name="Yamada K."/>
            <person name="Fujii Y."/>
            <person name="Ozaki K."/>
            <person name="Hirao M."/>
            <person name="Ohmori Y."/>
            <person name="Kawabata A."/>
            <person name="Hikiji T."/>
            <person name="Kobatake N."/>
            <person name="Inagaki H."/>
            <person name="Ikema Y."/>
            <person name="Okamoto S."/>
            <person name="Okitani R."/>
            <person name="Kawakami T."/>
            <person name="Noguchi S."/>
            <person name="Itoh T."/>
            <person name="Shigeta K."/>
            <person name="Senba T."/>
            <person name="Matsumura K."/>
            <person name="Nakajima Y."/>
            <person name="Mizuno T."/>
            <person name="Morinaga M."/>
            <person name="Sasaki M."/>
            <person name="Togashi T."/>
            <person name="Oyama M."/>
            <person name="Hata H."/>
            <person name="Watanabe M."/>
            <person name="Komatsu T."/>
            <person name="Mizushima-Sugano J."/>
            <person name="Satoh T."/>
            <person name="Shirai Y."/>
            <person name="Takahashi Y."/>
            <person name="Nakagawa K."/>
            <person name="Okumura K."/>
            <person name="Nagase T."/>
            <person name="Nomura N."/>
            <person name="Kikuchi H."/>
            <person name="Masuho Y."/>
            <person name="Yamashita R."/>
            <person name="Nakai K."/>
            <person name="Yada T."/>
            <person name="Nakamura Y."/>
            <person name="Ohara O."/>
            <person name="Isogai T."/>
            <person name="Sugano S."/>
        </authorList>
    </citation>
    <scope>NUCLEOTIDE SEQUENCE [LARGE SCALE MRNA]</scope>
    <source>
        <tissue>Tongue</tissue>
    </source>
</reference>
<reference key="5">
    <citation type="submission" date="2004-06" db="EMBL/GenBank/DDBJ databases">
        <title>Cloning of human full open reading frames in Gateway(TM) system entry vector (pDONR201).</title>
        <authorList>
            <person name="Ebert L."/>
            <person name="Schick M."/>
            <person name="Neubert P."/>
            <person name="Schatten R."/>
            <person name="Henze S."/>
            <person name="Korn B."/>
        </authorList>
    </citation>
    <scope>NUCLEOTIDE SEQUENCE [LARGE SCALE MRNA]</scope>
</reference>
<reference key="6">
    <citation type="journal article" date="2001" name="Nature">
        <title>The DNA sequence and comparative analysis of human chromosome 20.</title>
        <authorList>
            <person name="Deloukas P."/>
            <person name="Matthews L.H."/>
            <person name="Ashurst J.L."/>
            <person name="Burton J."/>
            <person name="Gilbert J.G.R."/>
            <person name="Jones M."/>
            <person name="Stavrides G."/>
            <person name="Almeida J.P."/>
            <person name="Babbage A.K."/>
            <person name="Bagguley C.L."/>
            <person name="Bailey J."/>
            <person name="Barlow K.F."/>
            <person name="Bates K.N."/>
            <person name="Beard L.M."/>
            <person name="Beare D.M."/>
            <person name="Beasley O.P."/>
            <person name="Bird C.P."/>
            <person name="Blakey S.E."/>
            <person name="Bridgeman A.M."/>
            <person name="Brown A.J."/>
            <person name="Buck D."/>
            <person name="Burrill W.D."/>
            <person name="Butler A.P."/>
            <person name="Carder C."/>
            <person name="Carter N.P."/>
            <person name="Chapman J.C."/>
            <person name="Clamp M."/>
            <person name="Clark G."/>
            <person name="Clark L.N."/>
            <person name="Clark S.Y."/>
            <person name="Clee C.M."/>
            <person name="Clegg S."/>
            <person name="Cobley V.E."/>
            <person name="Collier R.E."/>
            <person name="Connor R.E."/>
            <person name="Corby N.R."/>
            <person name="Coulson A."/>
            <person name="Coville G.J."/>
            <person name="Deadman R."/>
            <person name="Dhami P.D."/>
            <person name="Dunn M."/>
            <person name="Ellington A.G."/>
            <person name="Frankland J.A."/>
            <person name="Fraser A."/>
            <person name="French L."/>
            <person name="Garner P."/>
            <person name="Grafham D.V."/>
            <person name="Griffiths C."/>
            <person name="Griffiths M.N.D."/>
            <person name="Gwilliam R."/>
            <person name="Hall R.E."/>
            <person name="Hammond S."/>
            <person name="Harley J.L."/>
            <person name="Heath P.D."/>
            <person name="Ho S."/>
            <person name="Holden J.L."/>
            <person name="Howden P.J."/>
            <person name="Huckle E."/>
            <person name="Hunt A.R."/>
            <person name="Hunt S.E."/>
            <person name="Jekosch K."/>
            <person name="Johnson C.M."/>
            <person name="Johnson D."/>
            <person name="Kay M.P."/>
            <person name="Kimberley A.M."/>
            <person name="King A."/>
            <person name="Knights A."/>
            <person name="Laird G.K."/>
            <person name="Lawlor S."/>
            <person name="Lehvaeslaiho M.H."/>
            <person name="Leversha M.A."/>
            <person name="Lloyd C."/>
            <person name="Lloyd D.M."/>
            <person name="Lovell J.D."/>
            <person name="Marsh V.L."/>
            <person name="Martin S.L."/>
            <person name="McConnachie L.J."/>
            <person name="McLay K."/>
            <person name="McMurray A.A."/>
            <person name="Milne S.A."/>
            <person name="Mistry D."/>
            <person name="Moore M.J.F."/>
            <person name="Mullikin J.C."/>
            <person name="Nickerson T."/>
            <person name="Oliver K."/>
            <person name="Parker A."/>
            <person name="Patel R."/>
            <person name="Pearce T.A.V."/>
            <person name="Peck A.I."/>
            <person name="Phillimore B.J.C.T."/>
            <person name="Prathalingam S.R."/>
            <person name="Plumb R.W."/>
            <person name="Ramsay H."/>
            <person name="Rice C.M."/>
            <person name="Ross M.T."/>
            <person name="Scott C.E."/>
            <person name="Sehra H.K."/>
            <person name="Shownkeen R."/>
            <person name="Sims S."/>
            <person name="Skuce C.D."/>
            <person name="Smith M.L."/>
            <person name="Soderlund C."/>
            <person name="Steward C.A."/>
            <person name="Sulston J.E."/>
            <person name="Swann R.M."/>
            <person name="Sycamore N."/>
            <person name="Taylor R."/>
            <person name="Tee L."/>
            <person name="Thomas D.W."/>
            <person name="Thorpe A."/>
            <person name="Tracey A."/>
            <person name="Tromans A.C."/>
            <person name="Vaudin M."/>
            <person name="Wall M."/>
            <person name="Wallis J.M."/>
            <person name="Whitehead S.L."/>
            <person name="Whittaker P."/>
            <person name="Willey D.L."/>
            <person name="Williams L."/>
            <person name="Williams S.A."/>
            <person name="Wilming L."/>
            <person name="Wray P.W."/>
            <person name="Hubbard T."/>
            <person name="Durbin R.M."/>
            <person name="Bentley D.R."/>
            <person name="Beck S."/>
            <person name="Rogers J."/>
        </authorList>
    </citation>
    <scope>NUCLEOTIDE SEQUENCE [LARGE SCALE GENOMIC DNA]</scope>
</reference>
<reference key="7">
    <citation type="submission" date="2005-09" db="EMBL/GenBank/DDBJ databases">
        <authorList>
            <person name="Mural R.J."/>
            <person name="Istrail S."/>
            <person name="Sutton G."/>
            <person name="Florea L."/>
            <person name="Halpern A.L."/>
            <person name="Mobarry C.M."/>
            <person name="Lippert R."/>
            <person name="Walenz B."/>
            <person name="Shatkay H."/>
            <person name="Dew I."/>
            <person name="Miller J.R."/>
            <person name="Flanigan M.J."/>
            <person name="Edwards N.J."/>
            <person name="Bolanos R."/>
            <person name="Fasulo D."/>
            <person name="Halldorsson B.V."/>
            <person name="Hannenhalli S."/>
            <person name="Turner R."/>
            <person name="Yooseph S."/>
            <person name="Lu F."/>
            <person name="Nusskern D.R."/>
            <person name="Shue B.C."/>
            <person name="Zheng X.H."/>
            <person name="Zhong F."/>
            <person name="Delcher A.L."/>
            <person name="Huson D.H."/>
            <person name="Kravitz S.A."/>
            <person name="Mouchard L."/>
            <person name="Reinert K."/>
            <person name="Remington K.A."/>
            <person name="Clark A.G."/>
            <person name="Waterman M.S."/>
            <person name="Eichler E.E."/>
            <person name="Adams M.D."/>
            <person name="Hunkapiller M.W."/>
            <person name="Myers E.W."/>
            <person name="Venter J.C."/>
        </authorList>
    </citation>
    <scope>NUCLEOTIDE SEQUENCE [LARGE SCALE GENOMIC DNA]</scope>
</reference>
<reference key="8">
    <citation type="journal article" date="2004" name="Genome Res.">
        <title>The status, quality, and expansion of the NIH full-length cDNA project: the Mammalian Gene Collection (MGC).</title>
        <authorList>
            <consortium name="The MGC Project Team"/>
        </authorList>
    </citation>
    <scope>NUCLEOTIDE SEQUENCE [LARGE SCALE MRNA]</scope>
    <source>
        <tissue>Liver</tissue>
    </source>
</reference>
<reference key="9">
    <citation type="journal article" date="1976" name="J. Mol. Evol.">
        <title>Human skeletal muscle proteins. The primary structure of troponin C.</title>
        <authorList>
            <person name="Romero-Herrera A.E."/>
            <person name="Castillo O."/>
            <person name="Lehmann H."/>
        </authorList>
    </citation>
    <scope>PROTEIN SEQUENCE OF 2-160</scope>
    <scope>ACETYLATION AT THR-2</scope>
    <source>
        <tissue>Skeletal muscle</tissue>
    </source>
</reference>
<reference key="10">
    <citation type="journal article" date="2021" name="J. Clin. Invest.">
        <title>Pathogenic variants in TNNC2 cause congenital myopathy due to an impaired force response to calcium.</title>
        <authorList>
            <person name="van de Locht M."/>
            <person name="Donkervoort S."/>
            <person name="de Winter J.M."/>
            <person name="Conijn S."/>
            <person name="Begthel L."/>
            <person name="Kusters B."/>
            <person name="Mohassel P."/>
            <person name="Hu Y."/>
            <person name="Medne L."/>
            <person name="Quinn C."/>
            <person name="Moore S.A."/>
            <person name="Foley A.R."/>
            <person name="Seo G."/>
            <person name="Hwee D.T."/>
            <person name="Malik F.I."/>
            <person name="Irving T."/>
            <person name="Ma W."/>
            <person name="Granzier H.L."/>
            <person name="Kamsteeg E.J."/>
            <person name="Immadisetty K."/>
            <person name="Kekenes-Huskey P."/>
            <person name="Pinto J.R."/>
            <person name="Voermans N."/>
            <person name="Boennemann C.G."/>
            <person name="Ottenheijm C.A."/>
        </authorList>
    </citation>
    <scope>INVOLVEMENT IN CMYO15</scope>
    <scope>VARIANTS CMYO15 TYR-34 AND ILE-79</scope>
    <scope>CHARACTERIZATION OF VARIANTS CMYO15 TYR-34 AND ILE-79</scope>
    <scope>FUNCTION</scope>
</reference>
<feature type="initiator methionine" description="Removed" evidence="3">
    <location>
        <position position="1"/>
    </location>
</feature>
<feature type="chain" id="PRO_0000073703" description="Troponin C, skeletal muscle">
    <location>
        <begin position="2"/>
        <end position="160"/>
    </location>
</feature>
<feature type="domain" description="EF-hand 1" evidence="1">
    <location>
        <begin position="15"/>
        <end position="50"/>
    </location>
</feature>
<feature type="domain" description="EF-hand 2" evidence="1">
    <location>
        <begin position="51"/>
        <end position="86"/>
    </location>
</feature>
<feature type="domain" description="EF-hand 3" evidence="1">
    <location>
        <begin position="91"/>
        <end position="126"/>
    </location>
</feature>
<feature type="domain" description="EF-hand 4" evidence="1">
    <location>
        <begin position="127"/>
        <end position="160"/>
    </location>
</feature>
<feature type="binding site" evidence="1">
    <location>
        <position position="28"/>
    </location>
    <ligand>
        <name>Ca(2+)</name>
        <dbReference type="ChEBI" id="CHEBI:29108"/>
        <label>1</label>
    </ligand>
</feature>
<feature type="binding site" evidence="1">
    <location>
        <position position="30"/>
    </location>
    <ligand>
        <name>Ca(2+)</name>
        <dbReference type="ChEBI" id="CHEBI:29108"/>
        <label>1</label>
    </ligand>
</feature>
<feature type="binding site" evidence="1">
    <location>
        <position position="34"/>
    </location>
    <ligand>
        <name>Ca(2+)</name>
        <dbReference type="ChEBI" id="CHEBI:29108"/>
        <label>1</label>
    </ligand>
</feature>
<feature type="binding site" evidence="1">
    <location>
        <position position="39"/>
    </location>
    <ligand>
        <name>Ca(2+)</name>
        <dbReference type="ChEBI" id="CHEBI:29108"/>
        <label>1</label>
    </ligand>
</feature>
<feature type="binding site" evidence="1">
    <location>
        <position position="64"/>
    </location>
    <ligand>
        <name>Ca(2+)</name>
        <dbReference type="ChEBI" id="CHEBI:29108"/>
        <label>2</label>
    </ligand>
</feature>
<feature type="binding site" evidence="1">
    <location>
        <position position="66"/>
    </location>
    <ligand>
        <name>Ca(2+)</name>
        <dbReference type="ChEBI" id="CHEBI:29108"/>
        <label>2</label>
    </ligand>
</feature>
<feature type="binding site" evidence="1">
    <location>
        <position position="68"/>
    </location>
    <ligand>
        <name>Ca(2+)</name>
        <dbReference type="ChEBI" id="CHEBI:29108"/>
        <label>2</label>
    </ligand>
</feature>
<feature type="binding site" evidence="1">
    <location>
        <position position="70"/>
    </location>
    <ligand>
        <name>Ca(2+)</name>
        <dbReference type="ChEBI" id="CHEBI:29108"/>
        <label>2</label>
    </ligand>
</feature>
<feature type="binding site" evidence="1">
    <location>
        <position position="75"/>
    </location>
    <ligand>
        <name>Ca(2+)</name>
        <dbReference type="ChEBI" id="CHEBI:29108"/>
        <label>2</label>
    </ligand>
</feature>
<feature type="binding site" evidence="1">
    <location>
        <position position="104"/>
    </location>
    <ligand>
        <name>Ca(2+)</name>
        <dbReference type="ChEBI" id="CHEBI:29108"/>
        <label>3</label>
    </ligand>
</feature>
<feature type="binding site" evidence="1">
    <location>
        <position position="106"/>
    </location>
    <ligand>
        <name>Ca(2+)</name>
        <dbReference type="ChEBI" id="CHEBI:29108"/>
        <label>3</label>
    </ligand>
</feature>
<feature type="binding site" evidence="1">
    <location>
        <position position="108"/>
    </location>
    <ligand>
        <name>Ca(2+)</name>
        <dbReference type="ChEBI" id="CHEBI:29108"/>
        <label>3</label>
    </ligand>
</feature>
<feature type="binding site" evidence="1">
    <location>
        <position position="110"/>
    </location>
    <ligand>
        <name>Ca(2+)</name>
        <dbReference type="ChEBI" id="CHEBI:29108"/>
        <label>3</label>
    </ligand>
</feature>
<feature type="binding site" evidence="1">
    <location>
        <position position="115"/>
    </location>
    <ligand>
        <name>Ca(2+)</name>
        <dbReference type="ChEBI" id="CHEBI:29108"/>
        <label>3</label>
    </ligand>
</feature>
<feature type="binding site" evidence="1">
    <location>
        <position position="140"/>
    </location>
    <ligand>
        <name>Ca(2+)</name>
        <dbReference type="ChEBI" id="CHEBI:29108"/>
        <label>4</label>
    </ligand>
</feature>
<feature type="binding site" evidence="1">
    <location>
        <position position="142"/>
    </location>
    <ligand>
        <name>Ca(2+)</name>
        <dbReference type="ChEBI" id="CHEBI:29108"/>
        <label>4</label>
    </ligand>
</feature>
<feature type="binding site" evidence="1">
    <location>
        <position position="144"/>
    </location>
    <ligand>
        <name>Ca(2+)</name>
        <dbReference type="ChEBI" id="CHEBI:29108"/>
        <label>4</label>
    </ligand>
</feature>
<feature type="binding site" evidence="1">
    <location>
        <position position="146"/>
    </location>
    <ligand>
        <name>Ca(2+)</name>
        <dbReference type="ChEBI" id="CHEBI:29108"/>
        <label>4</label>
    </ligand>
</feature>
<feature type="binding site" evidence="1">
    <location>
        <position position="151"/>
    </location>
    <ligand>
        <name>Ca(2+)</name>
        <dbReference type="ChEBI" id="CHEBI:29108"/>
        <label>4</label>
    </ligand>
</feature>
<feature type="modified residue" description="N-acetylthreonine" evidence="3">
    <location>
        <position position="2"/>
    </location>
</feature>
<feature type="sequence variant" id="VAR_087978" description="In CMYO15; affects regulation of muscle contraction." evidence="2">
    <original>D</original>
    <variation>Y</variation>
    <location>
        <position position="34"/>
    </location>
</feature>
<feature type="sequence variant" id="VAR_087979" description="In CMYO15; affects regulation of muscle contraction; dbSNP:rs1804548." evidence="2">
    <original>M</original>
    <variation>I</variation>
    <location>
        <position position="79"/>
    </location>
</feature>
<feature type="sequence conflict" description="In Ref. 9; AA sequence." evidence="4" ref="9">
    <original>TD</original>
    <variation>DT</variation>
    <location>
        <begin position="2"/>
        <end position="3"/>
    </location>
</feature>
<feature type="sequence conflict" description="In Ref. 3; AAA91854." evidence="4" ref="3">
    <original>E</original>
    <variation>G</variation>
    <location>
        <position position="114"/>
    </location>
</feature>
<feature type="helix" evidence="5">
    <location>
        <begin position="4"/>
        <end position="10"/>
    </location>
</feature>
<feature type="helix" evidence="5">
    <location>
        <begin position="14"/>
        <end position="20"/>
    </location>
</feature>
<feature type="helix" evidence="5">
    <location>
        <begin position="23"/>
        <end position="27"/>
    </location>
</feature>
<feature type="strand" evidence="5">
    <location>
        <begin position="29"/>
        <end position="32"/>
    </location>
</feature>
<feature type="helix" evidence="5">
    <location>
        <begin position="37"/>
        <end position="46"/>
    </location>
</feature>
<feature type="helix" evidence="5">
    <location>
        <begin position="53"/>
        <end position="61"/>
    </location>
</feature>
<feature type="helix" evidence="5">
    <location>
        <begin position="73"/>
        <end position="88"/>
    </location>
</feature>
<sequence>MTDQQAEARSYLSEEMIAEFKAAFDMFDADGGGDISVKELGTVMRMLGQTPTKEELDAIIEEVDEDGSGTIDFEEFLVMMVRQMKEDAKGKSEEELAECFRIFDRNADGYIDPEELAEIFRASGEHVTDEEIESLMKDGDKNNDGRIDFDEFLKMMEGVQ</sequence>
<keyword id="KW-0002">3D-structure</keyword>
<keyword id="KW-0007">Acetylation</keyword>
<keyword id="KW-0106">Calcium</keyword>
<keyword id="KW-0903">Direct protein sequencing</keyword>
<keyword id="KW-0225">Disease variant</keyword>
<keyword id="KW-0479">Metal-binding</keyword>
<keyword id="KW-0514">Muscle protein</keyword>
<keyword id="KW-1267">Proteomics identification</keyword>
<keyword id="KW-1185">Reference proteome</keyword>
<keyword id="KW-0677">Repeat</keyword>
<accession>P02585</accession>
<accession>Q6FH92</accession>
<gene>
    <name type="primary">TNNC2</name>
</gene>
<organism>
    <name type="scientific">Homo sapiens</name>
    <name type="common">Human</name>
    <dbReference type="NCBI Taxonomy" id="9606"/>
    <lineage>
        <taxon>Eukaryota</taxon>
        <taxon>Metazoa</taxon>
        <taxon>Chordata</taxon>
        <taxon>Craniata</taxon>
        <taxon>Vertebrata</taxon>
        <taxon>Euteleostomi</taxon>
        <taxon>Mammalia</taxon>
        <taxon>Eutheria</taxon>
        <taxon>Euarchontoglires</taxon>
        <taxon>Primates</taxon>
        <taxon>Haplorrhini</taxon>
        <taxon>Catarrhini</taxon>
        <taxon>Hominidae</taxon>
        <taxon>Homo</taxon>
    </lineage>
</organism>
<protein>
    <recommendedName>
        <fullName>Troponin C, skeletal muscle</fullName>
    </recommendedName>
</protein>
<dbReference type="EMBL" id="X07898">
    <property type="protein sequence ID" value="CAA30737.1"/>
    <property type="molecule type" value="mRNA"/>
</dbReference>
<dbReference type="EMBL" id="M33772">
    <property type="protein sequence ID" value="AAA61197.1"/>
    <property type="molecule type" value="Genomic_DNA"/>
</dbReference>
<dbReference type="EMBL" id="M33771">
    <property type="protein sequence ID" value="AAA61197.1"/>
    <property type="status" value="JOINED"/>
    <property type="molecule type" value="Genomic_DNA"/>
</dbReference>
<dbReference type="EMBL" id="M22307">
    <property type="protein sequence ID" value="AAA91854.1"/>
    <property type="molecule type" value="mRNA"/>
</dbReference>
<dbReference type="EMBL" id="AK291323">
    <property type="protein sequence ID" value="BAF84012.1"/>
    <property type="molecule type" value="mRNA"/>
</dbReference>
<dbReference type="EMBL" id="CR541864">
    <property type="protein sequence ID" value="CAG46662.1"/>
    <property type="molecule type" value="mRNA"/>
</dbReference>
<dbReference type="EMBL" id="CR541884">
    <property type="protein sequence ID" value="CAG46682.1"/>
    <property type="molecule type" value="mRNA"/>
</dbReference>
<dbReference type="EMBL" id="CH471077">
    <property type="protein sequence ID" value="EAW75803.1"/>
    <property type="molecule type" value="Genomic_DNA"/>
</dbReference>
<dbReference type="EMBL" id="AL050348">
    <property type="status" value="NOT_ANNOTATED_CDS"/>
    <property type="molecule type" value="Genomic_DNA"/>
</dbReference>
<dbReference type="EMBL" id="BC005323">
    <property type="protein sequence ID" value="AAH05323.1"/>
    <property type="molecule type" value="mRNA"/>
</dbReference>
<dbReference type="CCDS" id="CCDS13375.1"/>
<dbReference type="PIR" id="A36574">
    <property type="entry name" value="TPHUCS"/>
</dbReference>
<dbReference type="RefSeq" id="NP_003270.1">
    <property type="nucleotide sequence ID" value="NM_003279.3"/>
</dbReference>
<dbReference type="PDB" id="7KAA">
    <property type="method" value="NMR"/>
    <property type="chains" value="A=1-88"/>
</dbReference>
<dbReference type="PDBsum" id="7KAA"/>
<dbReference type="BMRB" id="P02585"/>
<dbReference type="SMR" id="P02585"/>
<dbReference type="BioGRID" id="112980">
    <property type="interactions" value="67"/>
</dbReference>
<dbReference type="FunCoup" id="P02585">
    <property type="interactions" value="281"/>
</dbReference>
<dbReference type="IntAct" id="P02585">
    <property type="interactions" value="54"/>
</dbReference>
<dbReference type="STRING" id="9606.ENSP00000361636"/>
<dbReference type="ChEMBL" id="CHEMBL3831282"/>
<dbReference type="DrugBank" id="DB01373">
    <property type="generic name" value="Calcium"/>
</dbReference>
<dbReference type="DrugBank" id="DB01023">
    <property type="generic name" value="Felodipine"/>
</dbReference>
<dbReference type="DrugBank" id="DB04682">
    <property type="generic name" value="Octylphenoxy polyethoxyethanol"/>
</dbReference>
<dbReference type="DrugBank" id="DB15256">
    <property type="generic name" value="Reldesemtiv"/>
</dbReference>
<dbReference type="DrugBank" id="DB12209">
    <property type="generic name" value="Tirasemtiv"/>
</dbReference>
<dbReference type="iPTMnet" id="P02585"/>
<dbReference type="PhosphoSitePlus" id="P02585"/>
<dbReference type="BioMuta" id="TNNC2"/>
<dbReference type="DMDM" id="136043"/>
<dbReference type="jPOST" id="P02585"/>
<dbReference type="MassIVE" id="P02585"/>
<dbReference type="PaxDb" id="9606-ENSP00000361636"/>
<dbReference type="PeptideAtlas" id="P02585"/>
<dbReference type="ProteomicsDB" id="51535"/>
<dbReference type="Pumba" id="P02585"/>
<dbReference type="Antibodypedia" id="27766">
    <property type="antibodies" value="156 antibodies from 25 providers"/>
</dbReference>
<dbReference type="DNASU" id="7125"/>
<dbReference type="Ensembl" id="ENST00000372555.8">
    <property type="protein sequence ID" value="ENSP00000361636.3"/>
    <property type="gene ID" value="ENSG00000101470.10"/>
</dbReference>
<dbReference type="GeneID" id="7125"/>
<dbReference type="KEGG" id="hsa:7125"/>
<dbReference type="MANE-Select" id="ENST00000372555.8">
    <property type="protein sequence ID" value="ENSP00000361636.3"/>
    <property type="RefSeq nucleotide sequence ID" value="NM_003279.3"/>
    <property type="RefSeq protein sequence ID" value="NP_003270.1"/>
</dbReference>
<dbReference type="UCSC" id="uc002xpr.4">
    <property type="organism name" value="human"/>
</dbReference>
<dbReference type="AGR" id="HGNC:11944"/>
<dbReference type="CTD" id="7125"/>
<dbReference type="DisGeNET" id="7125"/>
<dbReference type="GeneCards" id="TNNC2"/>
<dbReference type="HGNC" id="HGNC:11944">
    <property type="gene designation" value="TNNC2"/>
</dbReference>
<dbReference type="HPA" id="ENSG00000101470">
    <property type="expression patterns" value="Group enriched (skeletal muscle, tongue)"/>
</dbReference>
<dbReference type="MalaCards" id="TNNC2"/>
<dbReference type="MIM" id="191039">
    <property type="type" value="gene"/>
</dbReference>
<dbReference type="MIM" id="620161">
    <property type="type" value="phenotype"/>
</dbReference>
<dbReference type="neXtProt" id="NX_P02585"/>
<dbReference type="OpenTargets" id="ENSG00000101470"/>
<dbReference type="PharmGKB" id="PA36633"/>
<dbReference type="VEuPathDB" id="HostDB:ENSG00000101470"/>
<dbReference type="eggNOG" id="KOG0027">
    <property type="taxonomic scope" value="Eukaryota"/>
</dbReference>
<dbReference type="GeneTree" id="ENSGT00940000153541"/>
<dbReference type="InParanoid" id="P02585"/>
<dbReference type="OMA" id="QVEARSY"/>
<dbReference type="OrthoDB" id="26525at2759"/>
<dbReference type="PAN-GO" id="P02585">
    <property type="GO annotations" value="6 GO annotations based on evolutionary models"/>
</dbReference>
<dbReference type="PhylomeDB" id="P02585"/>
<dbReference type="TreeFam" id="TF318191"/>
<dbReference type="PathwayCommons" id="P02585"/>
<dbReference type="Reactome" id="R-HSA-390522">
    <property type="pathway name" value="Striated Muscle Contraction"/>
</dbReference>
<dbReference type="SignaLink" id="P02585"/>
<dbReference type="SIGNOR" id="P02585"/>
<dbReference type="BioGRID-ORCS" id="7125">
    <property type="hits" value="14 hits in 1144 CRISPR screens"/>
</dbReference>
<dbReference type="ChiTaRS" id="TNNC2">
    <property type="organism name" value="human"/>
</dbReference>
<dbReference type="GeneWiki" id="TNNC2"/>
<dbReference type="GenomeRNAi" id="7125"/>
<dbReference type="Pharos" id="P02585">
    <property type="development level" value="Tbio"/>
</dbReference>
<dbReference type="PRO" id="PR:P02585"/>
<dbReference type="Proteomes" id="UP000005640">
    <property type="component" value="Chromosome 20"/>
</dbReference>
<dbReference type="RNAct" id="P02585">
    <property type="molecule type" value="protein"/>
</dbReference>
<dbReference type="Bgee" id="ENSG00000101470">
    <property type="expression patterns" value="Expressed in skeletal muscle tissue of rectus abdominis and 118 other cell types or tissues"/>
</dbReference>
<dbReference type="ExpressionAtlas" id="P02585">
    <property type="expression patterns" value="baseline and differential"/>
</dbReference>
<dbReference type="GO" id="GO:0005829">
    <property type="term" value="C:cytosol"/>
    <property type="evidence" value="ECO:0000304"/>
    <property type="project" value="Reactome"/>
</dbReference>
<dbReference type="GO" id="GO:0005861">
    <property type="term" value="C:troponin complex"/>
    <property type="evidence" value="ECO:0000314"/>
    <property type="project" value="UniProtKB"/>
</dbReference>
<dbReference type="GO" id="GO:0005509">
    <property type="term" value="F:calcium ion binding"/>
    <property type="evidence" value="ECO:0007669"/>
    <property type="project" value="InterPro"/>
</dbReference>
<dbReference type="GO" id="GO:0006937">
    <property type="term" value="P:regulation of muscle contraction"/>
    <property type="evidence" value="ECO:0000315"/>
    <property type="project" value="UniProtKB"/>
</dbReference>
<dbReference type="GO" id="GO:0003009">
    <property type="term" value="P:skeletal muscle contraction"/>
    <property type="evidence" value="ECO:0000314"/>
    <property type="project" value="UniProtKB"/>
</dbReference>
<dbReference type="CDD" id="cd00051">
    <property type="entry name" value="EFh"/>
    <property type="match status" value="2"/>
</dbReference>
<dbReference type="FunFam" id="1.10.238.10:FF:000107">
    <property type="entry name" value="Troponin C, skeletal muscle"/>
    <property type="match status" value="1"/>
</dbReference>
<dbReference type="Gene3D" id="1.10.238.10">
    <property type="entry name" value="EF-hand"/>
    <property type="match status" value="2"/>
</dbReference>
<dbReference type="InterPro" id="IPR050230">
    <property type="entry name" value="CALM/Myosin/TropC-like"/>
</dbReference>
<dbReference type="InterPro" id="IPR011992">
    <property type="entry name" value="EF-hand-dom_pair"/>
</dbReference>
<dbReference type="InterPro" id="IPR018247">
    <property type="entry name" value="EF_Hand_1_Ca_BS"/>
</dbReference>
<dbReference type="InterPro" id="IPR002048">
    <property type="entry name" value="EF_hand_dom"/>
</dbReference>
<dbReference type="PANTHER" id="PTHR23048">
    <property type="entry name" value="MYOSIN LIGHT CHAIN 1, 3"/>
    <property type="match status" value="1"/>
</dbReference>
<dbReference type="PANTHER" id="PTHR23048:SF57">
    <property type="entry name" value="TROPONIN C2, FAST SKELETAL TYPE"/>
    <property type="match status" value="1"/>
</dbReference>
<dbReference type="Pfam" id="PF13499">
    <property type="entry name" value="EF-hand_7"/>
    <property type="match status" value="2"/>
</dbReference>
<dbReference type="SMART" id="SM00054">
    <property type="entry name" value="EFh"/>
    <property type="match status" value="4"/>
</dbReference>
<dbReference type="SUPFAM" id="SSF47473">
    <property type="entry name" value="EF-hand"/>
    <property type="match status" value="1"/>
</dbReference>
<dbReference type="PROSITE" id="PS00018">
    <property type="entry name" value="EF_HAND_1"/>
    <property type="match status" value="4"/>
</dbReference>
<dbReference type="PROSITE" id="PS50222">
    <property type="entry name" value="EF_HAND_2"/>
    <property type="match status" value="4"/>
</dbReference>
<evidence type="ECO:0000255" key="1">
    <source>
        <dbReference type="PROSITE-ProRule" id="PRU00448"/>
    </source>
</evidence>
<evidence type="ECO:0000269" key="2">
    <source>
    </source>
</evidence>
<evidence type="ECO:0000269" key="3">
    <source>
    </source>
</evidence>
<evidence type="ECO:0000305" key="4"/>
<evidence type="ECO:0007829" key="5">
    <source>
        <dbReference type="PDB" id="7KAA"/>
    </source>
</evidence>
<comment type="function">
    <text evidence="2">Troponin is the central regulatory protein of striated muscle contraction. Tn consists of three components: Tn-I which is the inhibitor of actomyosin ATPase, Tn-T which contains the binding site for tropomyosin and Tn-C. The binding of calcium to Tn-C abolishes the inhibitory action of Tn on actin filaments.</text>
</comment>
<comment type="interaction">
    <interactant intactId="EBI-10249681">
        <id>P02585</id>
    </interactant>
    <interactant intactId="EBI-1644036">
        <id>Q86TI0</id>
        <label>TBC1D1</label>
    </interactant>
    <organismsDiffer>false</organismsDiffer>
    <experiments>3</experiments>
</comment>
<comment type="interaction">
    <interactant intactId="EBI-10249681">
        <id>P02585</id>
    </interactant>
    <interactant intactId="EBI-704146">
        <id>P19429</id>
        <label>TNNI3</label>
    </interactant>
    <organismsDiffer>false</organismsDiffer>
    <experiments>3</experiments>
</comment>
<comment type="interaction">
    <interactant intactId="EBI-10249681">
        <id>P02585</id>
    </interactant>
    <interactant intactId="EBI-10249686">
        <id>Q6FGX2</id>
        <label>TNNI3</label>
    </interactant>
    <organismsDiffer>false</organismsDiffer>
    <experiments>3</experiments>
</comment>
<comment type="disease" evidence="2">
    <disease id="DI-06570">
        <name>Congenital myopathy 15</name>
        <acronym>CMYO15</acronym>
        <description>An autosomal dominant myopathy characterized by neonatal onset of hypotonia, muscle weakness, and respiratory muscle involvement resulting in severe respiratory insufficiency. The disorder improves over time, although forced vital capacity remains decreased. Other features include facial weakness, often with ptosis or external ophthalmoplegia, jaw or distal joint contractures, scoliosis, and osteopenia.</description>
        <dbReference type="MIM" id="620161"/>
    </disease>
    <text>The disease is caused by variants affecting the gene represented in this entry.</text>
</comment>
<comment type="miscellaneous">
    <text>Skeletal muscle troponin C binds four calcium ions.</text>
</comment>
<comment type="similarity">
    <text evidence="4">Belongs to the troponin C family.</text>
</comment>